<feature type="signal peptide" evidence="1">
    <location>
        <begin position="1"/>
        <end position="20"/>
    </location>
</feature>
<feature type="chain" id="PRO_0000308702" description="Probable inactive ribonuclease-like protein 12">
    <location>
        <begin position="21"/>
        <end position="147"/>
    </location>
</feature>
<reference key="1">
    <citation type="journal article" date="2005" name="Genomics">
        <title>The ribonuclease A superfamily of mammals and birds: identifying new members and tracing evolutionary histories.</title>
        <authorList>
            <person name="Cho S."/>
            <person name="Beintema J.J."/>
            <person name="Zhang J."/>
        </authorList>
    </citation>
    <scope>NUCLEOTIDE SEQUENCE [MRNA]</scope>
</reference>
<reference key="2">
    <citation type="journal article" date="2004" name="Genome Res.">
        <title>The status, quality, and expansion of the NIH full-length cDNA project: the Mammalian Gene Collection (MGC).</title>
        <authorList>
            <consortium name="The MGC Project Team"/>
        </authorList>
    </citation>
    <scope>NUCLEOTIDE SEQUENCE [LARGE SCALE MRNA]</scope>
</reference>
<organism>
    <name type="scientific">Homo sapiens</name>
    <name type="common">Human</name>
    <dbReference type="NCBI Taxonomy" id="9606"/>
    <lineage>
        <taxon>Eukaryota</taxon>
        <taxon>Metazoa</taxon>
        <taxon>Chordata</taxon>
        <taxon>Craniata</taxon>
        <taxon>Vertebrata</taxon>
        <taxon>Euteleostomi</taxon>
        <taxon>Mammalia</taxon>
        <taxon>Eutheria</taxon>
        <taxon>Euarchontoglires</taxon>
        <taxon>Primates</taxon>
        <taxon>Haplorrhini</taxon>
        <taxon>Catarrhini</taxon>
        <taxon>Hominidae</taxon>
        <taxon>Homo</taxon>
    </lineage>
</organism>
<accession>Q5GAN4</accession>
<keyword id="KW-1267">Proteomics identification</keyword>
<keyword id="KW-1185">Reference proteome</keyword>
<keyword id="KW-0964">Secreted</keyword>
<keyword id="KW-0732">Signal</keyword>
<protein>
    <recommendedName>
        <fullName>Probable inactive ribonuclease-like protein 12</fullName>
    </recommendedName>
</protein>
<gene>
    <name type="primary">RNASE12</name>
</gene>
<evidence type="ECO:0000255" key="1"/>
<evidence type="ECO:0000305" key="2"/>
<comment type="function">
    <text evidence="2">Does not exhibit any ribonuclease activity.</text>
</comment>
<comment type="subcellular location">
    <subcellularLocation>
        <location evidence="2">Secreted</location>
    </subcellularLocation>
</comment>
<comment type="similarity">
    <text evidence="2">Belongs to the pancreatic ribonuclease family.</text>
</comment>
<name>RNS12_HUMAN</name>
<proteinExistence type="evidence at protein level"/>
<sequence length="147" mass="17177">MIIMVIIFLVLLFWENEVNDEAVMSTLEHLHVDYPQNDVPVPARYCNHMIIQRVIREPDHTCKKEHVFIHERPRKINGICISPKKVACQNLSAIFCFQSETKFKMTVCQLIEGTRYPACRYHYSPTEGFVLVTCDDLRPDSFLGYVK</sequence>
<dbReference type="EMBL" id="AY665807">
    <property type="protein sequence ID" value="AAV87185.1"/>
    <property type="molecule type" value="mRNA"/>
</dbReference>
<dbReference type="EMBL" id="BC130347">
    <property type="protein sequence ID" value="AAI30348.1"/>
    <property type="molecule type" value="mRNA"/>
</dbReference>
<dbReference type="EMBL" id="BC130349">
    <property type="protein sequence ID" value="AAI30350.1"/>
    <property type="molecule type" value="mRNA"/>
</dbReference>
<dbReference type="CCDS" id="CCDS32037.1"/>
<dbReference type="RefSeq" id="NP_001019993.1">
    <property type="nucleotide sequence ID" value="NM_001024822.4"/>
</dbReference>
<dbReference type="SMR" id="Q5GAN4"/>
<dbReference type="BioGRID" id="138928">
    <property type="interactions" value="2"/>
</dbReference>
<dbReference type="FunCoup" id="Q5GAN4">
    <property type="interactions" value="5"/>
</dbReference>
<dbReference type="STRING" id="9606.ENSP00000450580"/>
<dbReference type="BioMuta" id="RNASE12"/>
<dbReference type="DMDM" id="74741481"/>
<dbReference type="MassIVE" id="Q5GAN4"/>
<dbReference type="PaxDb" id="9606-ENSP00000450580"/>
<dbReference type="PeptideAtlas" id="Q5GAN4"/>
<dbReference type="Antibodypedia" id="57709">
    <property type="antibodies" value="90 antibodies from 17 providers"/>
</dbReference>
<dbReference type="DNASU" id="493901"/>
<dbReference type="Ensembl" id="ENST00000556526.1">
    <property type="protein sequence ID" value="ENSP00000450580.1"/>
    <property type="gene ID" value="ENSG00000258436.2"/>
</dbReference>
<dbReference type="Ensembl" id="ENST00000696784.1">
    <property type="protein sequence ID" value="ENSP00000512867.1"/>
    <property type="gene ID" value="ENSG00000258436.2"/>
</dbReference>
<dbReference type="GeneID" id="493901"/>
<dbReference type="KEGG" id="hsa:493901"/>
<dbReference type="MANE-Select" id="ENST00000696784.1">
    <property type="protein sequence ID" value="ENSP00000512867.1"/>
    <property type="RefSeq nucleotide sequence ID" value="NM_001024822.4"/>
    <property type="RefSeq protein sequence ID" value="NP_001019993.1"/>
</dbReference>
<dbReference type="AGR" id="HGNC:24211"/>
<dbReference type="CTD" id="493901"/>
<dbReference type="GeneCards" id="RNASE12"/>
<dbReference type="HGNC" id="HGNC:24211">
    <property type="gene designation" value="RNASE12"/>
</dbReference>
<dbReference type="HPA" id="ENSG00000258436">
    <property type="expression patterns" value="Tissue enriched (epididymis)"/>
</dbReference>
<dbReference type="neXtProt" id="NX_Q5GAN4"/>
<dbReference type="PharmGKB" id="PA134948996"/>
<dbReference type="VEuPathDB" id="HostDB:ENSG00000258436"/>
<dbReference type="eggNOG" id="ENOG502T3VJ">
    <property type="taxonomic scope" value="Eukaryota"/>
</dbReference>
<dbReference type="GeneTree" id="ENSGT00730000111478"/>
<dbReference type="HOGENOM" id="CLU_117006_1_0_1"/>
<dbReference type="InParanoid" id="Q5GAN4"/>
<dbReference type="OMA" id="KHVFIHE"/>
<dbReference type="OrthoDB" id="9824991at2759"/>
<dbReference type="PAN-GO" id="Q5GAN4">
    <property type="GO annotations" value="2 GO annotations based on evolutionary models"/>
</dbReference>
<dbReference type="PhylomeDB" id="Q5GAN4"/>
<dbReference type="TreeFam" id="TF333393"/>
<dbReference type="PathwayCommons" id="Q5GAN4"/>
<dbReference type="SignaLink" id="Q5GAN4"/>
<dbReference type="BioGRID-ORCS" id="493901">
    <property type="hits" value="11 hits in 1099 CRISPR screens"/>
</dbReference>
<dbReference type="GenomeRNAi" id="493901"/>
<dbReference type="Pharos" id="Q5GAN4">
    <property type="development level" value="Tdark"/>
</dbReference>
<dbReference type="PRO" id="PR:Q5GAN4"/>
<dbReference type="Proteomes" id="UP000005640">
    <property type="component" value="Chromosome 14"/>
</dbReference>
<dbReference type="RNAct" id="Q5GAN4">
    <property type="molecule type" value="protein"/>
</dbReference>
<dbReference type="Bgee" id="ENSG00000258436">
    <property type="expression patterns" value="Expressed in placenta and 7 other cell types or tissues"/>
</dbReference>
<dbReference type="ExpressionAtlas" id="Q5GAN4">
    <property type="expression patterns" value="baseline and differential"/>
</dbReference>
<dbReference type="GO" id="GO:0005576">
    <property type="term" value="C:extracellular region"/>
    <property type="evidence" value="ECO:0007669"/>
    <property type="project" value="UniProtKB-SubCell"/>
</dbReference>
<dbReference type="GO" id="GO:0003676">
    <property type="term" value="F:nucleic acid binding"/>
    <property type="evidence" value="ECO:0007669"/>
    <property type="project" value="InterPro"/>
</dbReference>
<dbReference type="GO" id="GO:0004540">
    <property type="term" value="F:RNA nuclease activity"/>
    <property type="evidence" value="ECO:0000318"/>
    <property type="project" value="GO_Central"/>
</dbReference>
<dbReference type="GO" id="GO:0050830">
    <property type="term" value="P:defense response to Gram-positive bacterium"/>
    <property type="evidence" value="ECO:0000318"/>
    <property type="project" value="GO_Central"/>
</dbReference>
<dbReference type="CDD" id="cd00163">
    <property type="entry name" value="RNase_A"/>
    <property type="match status" value="1"/>
</dbReference>
<dbReference type="FunFam" id="3.10.130.10:FF:000002">
    <property type="entry name" value="Inactive ribonuclease-like protein 10"/>
    <property type="match status" value="1"/>
</dbReference>
<dbReference type="Gene3D" id="3.10.130.10">
    <property type="entry name" value="Ribonuclease A-like domain"/>
    <property type="match status" value="1"/>
</dbReference>
<dbReference type="InterPro" id="IPR001427">
    <property type="entry name" value="RNaseA"/>
</dbReference>
<dbReference type="InterPro" id="IPR036816">
    <property type="entry name" value="RNaseA-like_dom_sf"/>
</dbReference>
<dbReference type="InterPro" id="IPR023412">
    <property type="entry name" value="RNaseA_domain"/>
</dbReference>
<dbReference type="PANTHER" id="PTHR11437:SF20">
    <property type="entry name" value="INACTIVE RIBONUCLEASE-LIKE PROTEIN 12-RELATED"/>
    <property type="match status" value="1"/>
</dbReference>
<dbReference type="PANTHER" id="PTHR11437">
    <property type="entry name" value="RIBONUCLEASE"/>
    <property type="match status" value="1"/>
</dbReference>
<dbReference type="Pfam" id="PF00074">
    <property type="entry name" value="RnaseA"/>
    <property type="match status" value="1"/>
</dbReference>
<dbReference type="PRINTS" id="PR00794">
    <property type="entry name" value="RIBONUCLEASE"/>
</dbReference>
<dbReference type="SMART" id="SM00092">
    <property type="entry name" value="RNAse_Pc"/>
    <property type="match status" value="1"/>
</dbReference>
<dbReference type="SUPFAM" id="SSF54076">
    <property type="entry name" value="RNase A-like"/>
    <property type="match status" value="1"/>
</dbReference>